<sequence>MPTEPETDYDPELGRKFIFVTGGVMSGLGKGITAASTGRLLKNAGFDVTAVKIDPYLNVDAGTMNPFQHGEVYVLKDGGEVDLDLGNYERFLDIDMTFDHNVTTGKTYQHVIEKERSGDYLGRTVQIIPHITDDIKRRIREAAEGNDVCIIEVGGTVGDIEGMPYLEALRQFAHEEDEDDILFTHVTLVPYSKNGEQKTKPTQHSVKELRSIGLQPDILVGRCSDKLDIDTKEKIGLFCDVPTEAVFSNPDVDDIYHVPLMVEEEGLDQYVMEELDIASEALPEDERENRWRDLVTQNTEGEVEVALVGKYDLEDAYMSVHEALKHAGLEKNVDVNVRWVNSEKMNDHHADRMREADAIVVPGGFGARGTEGKIEAIRYARENDIPFLGLCLGFQMAVVEYARNVLDLDDAHSAELEEDTPHPVIDILPEQYEIEDMGGTMRLGAHETEINANTLAATLYGGESCTERHRHRYEVNPEYIDDLEAAGLKFSGRAGNRMEILELGPEDHPYFIGTQFHPEFRSRPTRASPPFVGLLEAVLGDDPHTATTEEVSH</sequence>
<reference key="1">
    <citation type="journal article" date="2004" name="Genome Res.">
        <title>Genome sequence of Haloarcula marismortui: a halophilic archaeon from the Dead Sea.</title>
        <authorList>
            <person name="Baliga N.S."/>
            <person name="Bonneau R."/>
            <person name="Facciotti M.T."/>
            <person name="Pan M."/>
            <person name="Glusman G."/>
            <person name="Deutsch E.W."/>
            <person name="Shannon P."/>
            <person name="Chiu Y."/>
            <person name="Weng R.S."/>
            <person name="Gan R.R."/>
            <person name="Hung P."/>
            <person name="Date S.V."/>
            <person name="Marcotte E."/>
            <person name="Hood L."/>
            <person name="Ng W.V."/>
        </authorList>
    </citation>
    <scope>NUCLEOTIDE SEQUENCE [LARGE SCALE GENOMIC DNA]</scope>
    <source>
        <strain>ATCC 43049 / DSM 3752 / JCM 8966 / VKM B-1809</strain>
    </source>
</reference>
<organism>
    <name type="scientific">Haloarcula marismortui (strain ATCC 43049 / DSM 3752 / JCM 8966 / VKM B-1809)</name>
    <name type="common">Halobacterium marismortui</name>
    <dbReference type="NCBI Taxonomy" id="272569"/>
    <lineage>
        <taxon>Archaea</taxon>
        <taxon>Methanobacteriati</taxon>
        <taxon>Methanobacteriota</taxon>
        <taxon>Stenosarchaea group</taxon>
        <taxon>Halobacteria</taxon>
        <taxon>Halobacteriales</taxon>
        <taxon>Haloarculaceae</taxon>
        <taxon>Haloarcula</taxon>
    </lineage>
</organism>
<comment type="function">
    <text evidence="1">Catalyzes the ATP-dependent amination of UTP to CTP with either L-glutamine or ammonia as the source of nitrogen. Regulates intracellular CTP levels through interactions with the four ribonucleotide triphosphates.</text>
</comment>
<comment type="catalytic activity">
    <reaction evidence="1">
        <text>UTP + L-glutamine + ATP + H2O = CTP + L-glutamate + ADP + phosphate + 2 H(+)</text>
        <dbReference type="Rhea" id="RHEA:26426"/>
        <dbReference type="ChEBI" id="CHEBI:15377"/>
        <dbReference type="ChEBI" id="CHEBI:15378"/>
        <dbReference type="ChEBI" id="CHEBI:29985"/>
        <dbReference type="ChEBI" id="CHEBI:30616"/>
        <dbReference type="ChEBI" id="CHEBI:37563"/>
        <dbReference type="ChEBI" id="CHEBI:43474"/>
        <dbReference type="ChEBI" id="CHEBI:46398"/>
        <dbReference type="ChEBI" id="CHEBI:58359"/>
        <dbReference type="ChEBI" id="CHEBI:456216"/>
        <dbReference type="EC" id="6.3.4.2"/>
    </reaction>
</comment>
<comment type="catalytic activity">
    <reaction evidence="1">
        <text>L-glutamine + H2O = L-glutamate + NH4(+)</text>
        <dbReference type="Rhea" id="RHEA:15889"/>
        <dbReference type="ChEBI" id="CHEBI:15377"/>
        <dbReference type="ChEBI" id="CHEBI:28938"/>
        <dbReference type="ChEBI" id="CHEBI:29985"/>
        <dbReference type="ChEBI" id="CHEBI:58359"/>
    </reaction>
</comment>
<comment type="catalytic activity">
    <reaction evidence="1">
        <text>UTP + NH4(+) + ATP = CTP + ADP + phosphate + 2 H(+)</text>
        <dbReference type="Rhea" id="RHEA:16597"/>
        <dbReference type="ChEBI" id="CHEBI:15378"/>
        <dbReference type="ChEBI" id="CHEBI:28938"/>
        <dbReference type="ChEBI" id="CHEBI:30616"/>
        <dbReference type="ChEBI" id="CHEBI:37563"/>
        <dbReference type="ChEBI" id="CHEBI:43474"/>
        <dbReference type="ChEBI" id="CHEBI:46398"/>
        <dbReference type="ChEBI" id="CHEBI:456216"/>
    </reaction>
</comment>
<comment type="activity regulation">
    <text evidence="1">Allosterically activated by GTP, when glutamine is the substrate; GTP has no effect on the reaction when ammonia is the substrate. The allosteric effector GTP functions by stabilizing the protein conformation that binds the tetrahedral intermediate(s) formed during glutamine hydrolysis. Inhibited by the product CTP, via allosteric rather than competitive inhibition.</text>
</comment>
<comment type="pathway">
    <text evidence="1">Pyrimidine metabolism; CTP biosynthesis via de novo pathway; CTP from UDP: step 2/2.</text>
</comment>
<comment type="subunit">
    <text evidence="1">Homotetramer.</text>
</comment>
<comment type="miscellaneous">
    <text evidence="1">CTPSs have evolved a hybrid strategy for distinguishing between UTP and CTP. The overlapping regions of the product feedback inhibitory and substrate sites recognize a common feature in both compounds, the triphosphate moiety. To differentiate isosteric substrate and product pyrimidine rings, an additional pocket far from the expected kinase/ligase catalytic site, specifically recognizes the cytosine and ribose portions of the product inhibitor.</text>
</comment>
<comment type="similarity">
    <text evidence="1">Belongs to the CTP synthase family.</text>
</comment>
<accession>Q5UX57</accession>
<name>PYRG_HALMA</name>
<keyword id="KW-0067">ATP-binding</keyword>
<keyword id="KW-0315">Glutamine amidotransferase</keyword>
<keyword id="KW-0436">Ligase</keyword>
<keyword id="KW-0460">Magnesium</keyword>
<keyword id="KW-0479">Metal-binding</keyword>
<keyword id="KW-0547">Nucleotide-binding</keyword>
<keyword id="KW-0665">Pyrimidine biosynthesis</keyword>
<keyword id="KW-1185">Reference proteome</keyword>
<proteinExistence type="inferred from homology"/>
<dbReference type="EC" id="6.3.4.2" evidence="1"/>
<dbReference type="EMBL" id="AY596297">
    <property type="protein sequence ID" value="AAV48146.1"/>
    <property type="molecule type" value="Genomic_DNA"/>
</dbReference>
<dbReference type="RefSeq" id="WP_004963688.1">
    <property type="nucleotide sequence ID" value="NZ_CP039138.1"/>
</dbReference>
<dbReference type="SMR" id="Q5UX57"/>
<dbReference type="STRING" id="272569.rrnAC3471"/>
<dbReference type="PaxDb" id="272569-rrnAC3471"/>
<dbReference type="EnsemblBacteria" id="AAV48146">
    <property type="protein sequence ID" value="AAV48146"/>
    <property type="gene ID" value="rrnAC3471"/>
</dbReference>
<dbReference type="KEGG" id="hma:rrnAC3471"/>
<dbReference type="PATRIC" id="fig|272569.17.peg.3983"/>
<dbReference type="eggNOG" id="arCOG00063">
    <property type="taxonomic scope" value="Archaea"/>
</dbReference>
<dbReference type="HOGENOM" id="CLU_011675_5_0_2"/>
<dbReference type="UniPathway" id="UPA00159">
    <property type="reaction ID" value="UER00277"/>
</dbReference>
<dbReference type="Proteomes" id="UP000001169">
    <property type="component" value="Chromosome I"/>
</dbReference>
<dbReference type="GO" id="GO:0005524">
    <property type="term" value="F:ATP binding"/>
    <property type="evidence" value="ECO:0007669"/>
    <property type="project" value="UniProtKB-KW"/>
</dbReference>
<dbReference type="GO" id="GO:0003883">
    <property type="term" value="F:CTP synthase activity"/>
    <property type="evidence" value="ECO:0007669"/>
    <property type="project" value="UniProtKB-UniRule"/>
</dbReference>
<dbReference type="GO" id="GO:0004359">
    <property type="term" value="F:glutaminase activity"/>
    <property type="evidence" value="ECO:0007669"/>
    <property type="project" value="RHEA"/>
</dbReference>
<dbReference type="GO" id="GO:0042802">
    <property type="term" value="F:identical protein binding"/>
    <property type="evidence" value="ECO:0007669"/>
    <property type="project" value="TreeGrafter"/>
</dbReference>
<dbReference type="GO" id="GO:0046872">
    <property type="term" value="F:metal ion binding"/>
    <property type="evidence" value="ECO:0007669"/>
    <property type="project" value="UniProtKB-KW"/>
</dbReference>
<dbReference type="GO" id="GO:0044210">
    <property type="term" value="P:'de novo' CTP biosynthetic process"/>
    <property type="evidence" value="ECO:0007669"/>
    <property type="project" value="UniProtKB-UniRule"/>
</dbReference>
<dbReference type="GO" id="GO:0019856">
    <property type="term" value="P:pyrimidine nucleobase biosynthetic process"/>
    <property type="evidence" value="ECO:0007669"/>
    <property type="project" value="TreeGrafter"/>
</dbReference>
<dbReference type="CDD" id="cd03113">
    <property type="entry name" value="CTPS_N"/>
    <property type="match status" value="1"/>
</dbReference>
<dbReference type="CDD" id="cd01746">
    <property type="entry name" value="GATase1_CTP_Synthase"/>
    <property type="match status" value="1"/>
</dbReference>
<dbReference type="FunFam" id="3.40.50.300:FF:000009">
    <property type="entry name" value="CTP synthase"/>
    <property type="match status" value="1"/>
</dbReference>
<dbReference type="FunFam" id="3.40.50.880:FF:000002">
    <property type="entry name" value="CTP synthase"/>
    <property type="match status" value="1"/>
</dbReference>
<dbReference type="Gene3D" id="3.40.50.880">
    <property type="match status" value="1"/>
</dbReference>
<dbReference type="Gene3D" id="3.40.50.300">
    <property type="entry name" value="P-loop containing nucleotide triphosphate hydrolases"/>
    <property type="match status" value="1"/>
</dbReference>
<dbReference type="HAMAP" id="MF_01227">
    <property type="entry name" value="PyrG"/>
    <property type="match status" value="1"/>
</dbReference>
<dbReference type="InterPro" id="IPR029062">
    <property type="entry name" value="Class_I_gatase-like"/>
</dbReference>
<dbReference type="InterPro" id="IPR004468">
    <property type="entry name" value="CTP_synthase"/>
</dbReference>
<dbReference type="InterPro" id="IPR017456">
    <property type="entry name" value="CTP_synthase_N"/>
</dbReference>
<dbReference type="InterPro" id="IPR017926">
    <property type="entry name" value="GATASE"/>
</dbReference>
<dbReference type="InterPro" id="IPR033828">
    <property type="entry name" value="GATase1_CTP_Synthase"/>
</dbReference>
<dbReference type="InterPro" id="IPR027417">
    <property type="entry name" value="P-loop_NTPase"/>
</dbReference>
<dbReference type="NCBIfam" id="NF003792">
    <property type="entry name" value="PRK05380.1"/>
    <property type="match status" value="1"/>
</dbReference>
<dbReference type="NCBIfam" id="TIGR00337">
    <property type="entry name" value="PyrG"/>
    <property type="match status" value="1"/>
</dbReference>
<dbReference type="PANTHER" id="PTHR11550">
    <property type="entry name" value="CTP SYNTHASE"/>
    <property type="match status" value="1"/>
</dbReference>
<dbReference type="PANTHER" id="PTHR11550:SF0">
    <property type="entry name" value="CTP SYNTHASE-RELATED"/>
    <property type="match status" value="1"/>
</dbReference>
<dbReference type="Pfam" id="PF06418">
    <property type="entry name" value="CTP_synth_N"/>
    <property type="match status" value="1"/>
</dbReference>
<dbReference type="Pfam" id="PF00117">
    <property type="entry name" value="GATase"/>
    <property type="match status" value="1"/>
</dbReference>
<dbReference type="SUPFAM" id="SSF52317">
    <property type="entry name" value="Class I glutamine amidotransferase-like"/>
    <property type="match status" value="1"/>
</dbReference>
<dbReference type="SUPFAM" id="SSF52540">
    <property type="entry name" value="P-loop containing nucleoside triphosphate hydrolases"/>
    <property type="match status" value="1"/>
</dbReference>
<dbReference type="PROSITE" id="PS51273">
    <property type="entry name" value="GATASE_TYPE_1"/>
    <property type="match status" value="1"/>
</dbReference>
<feature type="chain" id="PRO_0000266271" description="CTP synthase">
    <location>
        <begin position="1"/>
        <end position="553"/>
    </location>
</feature>
<feature type="domain" description="Glutamine amidotransferase type-1" evidence="1">
    <location>
        <begin position="307"/>
        <end position="544"/>
    </location>
</feature>
<feature type="region of interest" description="Amidoligase domain" evidence="1">
    <location>
        <begin position="1"/>
        <end position="277"/>
    </location>
</feature>
<feature type="active site" description="Nucleophile; for glutamine hydrolysis" evidence="1">
    <location>
        <position position="391"/>
    </location>
</feature>
<feature type="active site" evidence="1">
    <location>
        <position position="517"/>
    </location>
</feature>
<feature type="active site" evidence="1">
    <location>
        <position position="519"/>
    </location>
</feature>
<feature type="binding site" evidence="1">
    <location>
        <position position="26"/>
    </location>
    <ligand>
        <name>CTP</name>
        <dbReference type="ChEBI" id="CHEBI:37563"/>
        <note>allosteric inhibitor</note>
    </ligand>
</feature>
<feature type="binding site" evidence="1">
    <location>
        <position position="26"/>
    </location>
    <ligand>
        <name>UTP</name>
        <dbReference type="ChEBI" id="CHEBI:46398"/>
    </ligand>
</feature>
<feature type="binding site" evidence="1">
    <location>
        <begin position="27"/>
        <end position="32"/>
    </location>
    <ligand>
        <name>ATP</name>
        <dbReference type="ChEBI" id="CHEBI:30616"/>
    </ligand>
</feature>
<feature type="binding site" evidence="1">
    <location>
        <position position="84"/>
    </location>
    <ligand>
        <name>ATP</name>
        <dbReference type="ChEBI" id="CHEBI:30616"/>
    </ligand>
</feature>
<feature type="binding site" evidence="1">
    <location>
        <position position="84"/>
    </location>
    <ligand>
        <name>Mg(2+)</name>
        <dbReference type="ChEBI" id="CHEBI:18420"/>
    </ligand>
</feature>
<feature type="binding site" evidence="1">
    <location>
        <position position="152"/>
    </location>
    <ligand>
        <name>Mg(2+)</name>
        <dbReference type="ChEBI" id="CHEBI:18420"/>
    </ligand>
</feature>
<feature type="binding site" evidence="1">
    <location>
        <begin position="159"/>
        <end position="161"/>
    </location>
    <ligand>
        <name>CTP</name>
        <dbReference type="ChEBI" id="CHEBI:37563"/>
        <note>allosteric inhibitor</note>
    </ligand>
</feature>
<feature type="binding site" evidence="1">
    <location>
        <begin position="198"/>
        <end position="203"/>
    </location>
    <ligand>
        <name>CTP</name>
        <dbReference type="ChEBI" id="CHEBI:37563"/>
        <note>allosteric inhibitor</note>
    </ligand>
</feature>
<feature type="binding site" evidence="1">
    <location>
        <begin position="198"/>
        <end position="203"/>
    </location>
    <ligand>
        <name>UTP</name>
        <dbReference type="ChEBI" id="CHEBI:46398"/>
    </ligand>
</feature>
<feature type="binding site" evidence="1">
    <location>
        <position position="234"/>
    </location>
    <ligand>
        <name>CTP</name>
        <dbReference type="ChEBI" id="CHEBI:37563"/>
        <note>allosteric inhibitor</note>
    </ligand>
</feature>
<feature type="binding site" evidence="1">
    <location>
        <position position="234"/>
    </location>
    <ligand>
        <name>UTP</name>
        <dbReference type="ChEBI" id="CHEBI:46398"/>
    </ligand>
</feature>
<feature type="binding site" evidence="1">
    <location>
        <position position="364"/>
    </location>
    <ligand>
        <name>L-glutamine</name>
        <dbReference type="ChEBI" id="CHEBI:58359"/>
    </ligand>
</feature>
<feature type="binding site" evidence="1">
    <location>
        <begin position="392"/>
        <end position="395"/>
    </location>
    <ligand>
        <name>L-glutamine</name>
        <dbReference type="ChEBI" id="CHEBI:58359"/>
    </ligand>
</feature>
<feature type="binding site" evidence="1">
    <location>
        <position position="415"/>
    </location>
    <ligand>
        <name>L-glutamine</name>
        <dbReference type="ChEBI" id="CHEBI:58359"/>
    </ligand>
</feature>
<feature type="binding site" evidence="1">
    <location>
        <position position="472"/>
    </location>
    <ligand>
        <name>L-glutamine</name>
        <dbReference type="ChEBI" id="CHEBI:58359"/>
    </ligand>
</feature>
<evidence type="ECO:0000255" key="1">
    <source>
        <dbReference type="HAMAP-Rule" id="MF_01227"/>
    </source>
</evidence>
<protein>
    <recommendedName>
        <fullName evidence="1">CTP synthase</fullName>
        <ecNumber evidence="1">6.3.4.2</ecNumber>
    </recommendedName>
    <alternativeName>
        <fullName evidence="1">Cytidine 5'-triphosphate synthase</fullName>
    </alternativeName>
    <alternativeName>
        <fullName evidence="1">Cytidine triphosphate synthetase</fullName>
        <shortName evidence="1">CTP synthetase</shortName>
        <shortName evidence="1">CTPS</shortName>
    </alternativeName>
    <alternativeName>
        <fullName evidence="1">UTP--ammonia ligase</fullName>
    </alternativeName>
</protein>
<gene>
    <name evidence="1" type="primary">pyrG</name>
    <name type="ordered locus">rrnAC3471</name>
</gene>